<proteinExistence type="inferred from homology"/>
<comment type="function">
    <text evidence="1">Produces ATP from ADP in the presence of a proton gradient across the membrane. The catalytic sites are hosted primarily by the beta subunits.</text>
</comment>
<comment type="catalytic activity">
    <reaction evidence="1">
        <text>ATP + H2O + 4 H(+)(in) = ADP + phosphate + 5 H(+)(out)</text>
        <dbReference type="Rhea" id="RHEA:57720"/>
        <dbReference type="ChEBI" id="CHEBI:15377"/>
        <dbReference type="ChEBI" id="CHEBI:15378"/>
        <dbReference type="ChEBI" id="CHEBI:30616"/>
        <dbReference type="ChEBI" id="CHEBI:43474"/>
        <dbReference type="ChEBI" id="CHEBI:456216"/>
        <dbReference type="EC" id="7.1.2.2"/>
    </reaction>
</comment>
<comment type="subunit">
    <text evidence="1">F-type ATPases have 2 components, CF(1) - the catalytic core - and CF(0) - the membrane proton channel. CF(1) has five subunits: alpha(3), beta(3), gamma(1), delta(1), epsilon(1). CF(0) has three main subunits: a(1), b(2) and c(9-12). The alpha and beta chains form an alternating ring which encloses part of the gamma chain. CF(1) is attached to CF(0) by a central stalk formed by the gamma and epsilon chains, while a peripheral stalk is formed by the delta and b chains.</text>
</comment>
<comment type="subcellular location">
    <subcellularLocation>
        <location evidence="1">Cell membrane</location>
        <topology evidence="1">Peripheral membrane protein</topology>
    </subcellularLocation>
</comment>
<comment type="similarity">
    <text evidence="1">Belongs to the ATPase alpha/beta chains family.</text>
</comment>
<dbReference type="EC" id="7.1.2.2" evidence="1"/>
<dbReference type="EMBL" id="CP000422">
    <property type="protein sequence ID" value="ABJ68358.1"/>
    <property type="molecule type" value="Genomic_DNA"/>
</dbReference>
<dbReference type="RefSeq" id="WP_002833687.1">
    <property type="nucleotide sequence ID" value="NC_008525.1"/>
</dbReference>
<dbReference type="SMR" id="Q03EL4"/>
<dbReference type="STRING" id="278197.PEPE_1317"/>
<dbReference type="GeneID" id="33061476"/>
<dbReference type="KEGG" id="ppe:PEPE_1317"/>
<dbReference type="eggNOG" id="COG0055">
    <property type="taxonomic scope" value="Bacteria"/>
</dbReference>
<dbReference type="HOGENOM" id="CLU_022398_0_2_9"/>
<dbReference type="OrthoDB" id="9801639at2"/>
<dbReference type="Proteomes" id="UP000000773">
    <property type="component" value="Chromosome"/>
</dbReference>
<dbReference type="GO" id="GO:0005886">
    <property type="term" value="C:plasma membrane"/>
    <property type="evidence" value="ECO:0007669"/>
    <property type="project" value="UniProtKB-SubCell"/>
</dbReference>
<dbReference type="GO" id="GO:0045259">
    <property type="term" value="C:proton-transporting ATP synthase complex"/>
    <property type="evidence" value="ECO:0007669"/>
    <property type="project" value="UniProtKB-KW"/>
</dbReference>
<dbReference type="GO" id="GO:0005524">
    <property type="term" value="F:ATP binding"/>
    <property type="evidence" value="ECO:0007669"/>
    <property type="project" value="UniProtKB-UniRule"/>
</dbReference>
<dbReference type="GO" id="GO:0016887">
    <property type="term" value="F:ATP hydrolysis activity"/>
    <property type="evidence" value="ECO:0007669"/>
    <property type="project" value="InterPro"/>
</dbReference>
<dbReference type="GO" id="GO:0046933">
    <property type="term" value="F:proton-transporting ATP synthase activity, rotational mechanism"/>
    <property type="evidence" value="ECO:0007669"/>
    <property type="project" value="UniProtKB-UniRule"/>
</dbReference>
<dbReference type="CDD" id="cd18110">
    <property type="entry name" value="ATP-synt_F1_beta_C"/>
    <property type="match status" value="1"/>
</dbReference>
<dbReference type="CDD" id="cd18115">
    <property type="entry name" value="ATP-synt_F1_beta_N"/>
    <property type="match status" value="1"/>
</dbReference>
<dbReference type="CDD" id="cd01133">
    <property type="entry name" value="F1-ATPase_beta_CD"/>
    <property type="match status" value="1"/>
</dbReference>
<dbReference type="FunFam" id="1.10.1140.10:FF:000001">
    <property type="entry name" value="ATP synthase subunit beta"/>
    <property type="match status" value="1"/>
</dbReference>
<dbReference type="FunFam" id="2.40.10.170:FF:000005">
    <property type="entry name" value="ATP synthase subunit beta"/>
    <property type="match status" value="1"/>
</dbReference>
<dbReference type="FunFam" id="3.40.50.300:FF:000004">
    <property type="entry name" value="ATP synthase subunit beta"/>
    <property type="match status" value="1"/>
</dbReference>
<dbReference type="Gene3D" id="2.40.10.170">
    <property type="match status" value="1"/>
</dbReference>
<dbReference type="Gene3D" id="1.10.1140.10">
    <property type="entry name" value="Bovine Mitochondrial F1-atpase, Atp Synthase Beta Chain, Chain D, domain 3"/>
    <property type="match status" value="1"/>
</dbReference>
<dbReference type="Gene3D" id="3.40.50.300">
    <property type="entry name" value="P-loop containing nucleotide triphosphate hydrolases"/>
    <property type="match status" value="1"/>
</dbReference>
<dbReference type="HAMAP" id="MF_01347">
    <property type="entry name" value="ATP_synth_beta_bact"/>
    <property type="match status" value="1"/>
</dbReference>
<dbReference type="InterPro" id="IPR003593">
    <property type="entry name" value="AAA+_ATPase"/>
</dbReference>
<dbReference type="InterPro" id="IPR055190">
    <property type="entry name" value="ATP-synt_VA_C"/>
</dbReference>
<dbReference type="InterPro" id="IPR005722">
    <property type="entry name" value="ATP_synth_F1_bsu"/>
</dbReference>
<dbReference type="InterPro" id="IPR020003">
    <property type="entry name" value="ATPase_a/bsu_AS"/>
</dbReference>
<dbReference type="InterPro" id="IPR050053">
    <property type="entry name" value="ATPase_alpha/beta_chains"/>
</dbReference>
<dbReference type="InterPro" id="IPR004100">
    <property type="entry name" value="ATPase_F1/V1/A1_a/bsu_N"/>
</dbReference>
<dbReference type="InterPro" id="IPR036121">
    <property type="entry name" value="ATPase_F1/V1/A1_a/bsu_N_sf"/>
</dbReference>
<dbReference type="InterPro" id="IPR000194">
    <property type="entry name" value="ATPase_F1/V1/A1_a/bsu_nucl-bd"/>
</dbReference>
<dbReference type="InterPro" id="IPR024034">
    <property type="entry name" value="ATPase_F1/V1_b/a_C"/>
</dbReference>
<dbReference type="InterPro" id="IPR027417">
    <property type="entry name" value="P-loop_NTPase"/>
</dbReference>
<dbReference type="NCBIfam" id="TIGR01039">
    <property type="entry name" value="atpD"/>
    <property type="match status" value="1"/>
</dbReference>
<dbReference type="PANTHER" id="PTHR15184">
    <property type="entry name" value="ATP SYNTHASE"/>
    <property type="match status" value="1"/>
</dbReference>
<dbReference type="PANTHER" id="PTHR15184:SF71">
    <property type="entry name" value="ATP SYNTHASE SUBUNIT BETA, MITOCHONDRIAL"/>
    <property type="match status" value="1"/>
</dbReference>
<dbReference type="Pfam" id="PF00006">
    <property type="entry name" value="ATP-synt_ab"/>
    <property type="match status" value="1"/>
</dbReference>
<dbReference type="Pfam" id="PF02874">
    <property type="entry name" value="ATP-synt_ab_N"/>
    <property type="match status" value="1"/>
</dbReference>
<dbReference type="Pfam" id="PF22919">
    <property type="entry name" value="ATP-synt_VA_C"/>
    <property type="match status" value="1"/>
</dbReference>
<dbReference type="SMART" id="SM00382">
    <property type="entry name" value="AAA"/>
    <property type="match status" value="1"/>
</dbReference>
<dbReference type="SUPFAM" id="SSF47917">
    <property type="entry name" value="C-terminal domain of alpha and beta subunits of F1 ATP synthase"/>
    <property type="match status" value="1"/>
</dbReference>
<dbReference type="SUPFAM" id="SSF50615">
    <property type="entry name" value="N-terminal domain of alpha and beta subunits of F1 ATP synthase"/>
    <property type="match status" value="1"/>
</dbReference>
<dbReference type="SUPFAM" id="SSF52540">
    <property type="entry name" value="P-loop containing nucleoside triphosphate hydrolases"/>
    <property type="match status" value="1"/>
</dbReference>
<dbReference type="PROSITE" id="PS00152">
    <property type="entry name" value="ATPASE_ALPHA_BETA"/>
    <property type="match status" value="1"/>
</dbReference>
<feature type="chain" id="PRO_1000055141" description="ATP synthase subunit beta">
    <location>
        <begin position="1"/>
        <end position="469"/>
    </location>
</feature>
<feature type="binding site" evidence="1">
    <location>
        <begin position="153"/>
        <end position="160"/>
    </location>
    <ligand>
        <name>ATP</name>
        <dbReference type="ChEBI" id="CHEBI:30616"/>
    </ligand>
</feature>
<name>ATPB_PEDPA</name>
<keyword id="KW-0066">ATP synthesis</keyword>
<keyword id="KW-0067">ATP-binding</keyword>
<keyword id="KW-1003">Cell membrane</keyword>
<keyword id="KW-0139">CF(1)</keyword>
<keyword id="KW-0375">Hydrogen ion transport</keyword>
<keyword id="KW-0406">Ion transport</keyword>
<keyword id="KW-0472">Membrane</keyword>
<keyword id="KW-0547">Nucleotide-binding</keyword>
<keyword id="KW-1278">Translocase</keyword>
<keyword id="KW-0813">Transport</keyword>
<gene>
    <name evidence="1" type="primary">atpD</name>
    <name type="ordered locus">PEPE_1317</name>
</gene>
<accession>Q03EL4</accession>
<organism>
    <name type="scientific">Pediococcus pentosaceus (strain ATCC 25745 / CCUG 21536 / LMG 10740 / 183-1w)</name>
    <dbReference type="NCBI Taxonomy" id="278197"/>
    <lineage>
        <taxon>Bacteria</taxon>
        <taxon>Bacillati</taxon>
        <taxon>Bacillota</taxon>
        <taxon>Bacilli</taxon>
        <taxon>Lactobacillales</taxon>
        <taxon>Lactobacillaceae</taxon>
        <taxon>Pediococcus</taxon>
    </lineage>
</organism>
<sequence>MSTGKVVQVIGPVIDVEFPLDEELPTINNALKIKKADGTVLVSEVTLELGDGVVRTIAMDGTDGLQRGLDVEDTGDSIKVPVGKETLGRVFNVLGDTIDGGKELGPDIKRDPIHRDPPDYDELNPSTEVLETGIKVIDLLAPYIRGGKIGLFGGAGVGKTVLIQELIHNIAQEHNGISVFTGVGERTREGNDLYFEMKGSGVLERTAMVYGQMNEPPGARMRVALTGLTIAEHFRDVEGQDVLLFIDNIFRFTQAGSEVSALLGRIPSAVGYQPTLATEMGQLQERITSTKKGSVTSIQAVYVPADDYTDPAPATTFAHLDATTNLERALTQQGIYPAVDPLASTSTALDPQIVGEEHYEVATEVQHVLQRYKELQDIISILGMDELSDEEKTVVARARRIQLFLSQDFSVAAQFTGLPGHYVKIEDTISGFKGILDGKYDDLPEEAFRLVGSIDDVVEKAKKISATED</sequence>
<reference key="1">
    <citation type="journal article" date="2006" name="Proc. Natl. Acad. Sci. U.S.A.">
        <title>Comparative genomics of the lactic acid bacteria.</title>
        <authorList>
            <person name="Makarova K.S."/>
            <person name="Slesarev A."/>
            <person name="Wolf Y.I."/>
            <person name="Sorokin A."/>
            <person name="Mirkin B."/>
            <person name="Koonin E.V."/>
            <person name="Pavlov A."/>
            <person name="Pavlova N."/>
            <person name="Karamychev V."/>
            <person name="Polouchine N."/>
            <person name="Shakhova V."/>
            <person name="Grigoriev I."/>
            <person name="Lou Y."/>
            <person name="Rohksar D."/>
            <person name="Lucas S."/>
            <person name="Huang K."/>
            <person name="Goodstein D.M."/>
            <person name="Hawkins T."/>
            <person name="Plengvidhya V."/>
            <person name="Welker D."/>
            <person name="Hughes J."/>
            <person name="Goh Y."/>
            <person name="Benson A."/>
            <person name="Baldwin K."/>
            <person name="Lee J.-H."/>
            <person name="Diaz-Muniz I."/>
            <person name="Dosti B."/>
            <person name="Smeianov V."/>
            <person name="Wechter W."/>
            <person name="Barabote R."/>
            <person name="Lorca G."/>
            <person name="Altermann E."/>
            <person name="Barrangou R."/>
            <person name="Ganesan B."/>
            <person name="Xie Y."/>
            <person name="Rawsthorne H."/>
            <person name="Tamir D."/>
            <person name="Parker C."/>
            <person name="Breidt F."/>
            <person name="Broadbent J.R."/>
            <person name="Hutkins R."/>
            <person name="O'Sullivan D."/>
            <person name="Steele J."/>
            <person name="Unlu G."/>
            <person name="Saier M.H. Jr."/>
            <person name="Klaenhammer T."/>
            <person name="Richardson P."/>
            <person name="Kozyavkin S."/>
            <person name="Weimer B.C."/>
            <person name="Mills D.A."/>
        </authorList>
    </citation>
    <scope>NUCLEOTIDE SEQUENCE [LARGE SCALE GENOMIC DNA]</scope>
    <source>
        <strain>ATCC 25745 / CCUG 21536 / LMG 10740 / 183-1w</strain>
    </source>
</reference>
<protein>
    <recommendedName>
        <fullName evidence="1">ATP synthase subunit beta</fullName>
        <ecNumber evidence="1">7.1.2.2</ecNumber>
    </recommendedName>
    <alternativeName>
        <fullName evidence="1">ATP synthase F1 sector subunit beta</fullName>
    </alternativeName>
    <alternativeName>
        <fullName evidence="1">F-ATPase subunit beta</fullName>
    </alternativeName>
</protein>
<evidence type="ECO:0000255" key="1">
    <source>
        <dbReference type="HAMAP-Rule" id="MF_01347"/>
    </source>
</evidence>